<dbReference type="EMBL" id="AE017308">
    <property type="protein sequence ID" value="AAT27711.1"/>
    <property type="molecule type" value="Genomic_DNA"/>
</dbReference>
<dbReference type="SMR" id="Q6KI65"/>
<dbReference type="STRING" id="267748.MMOB2250"/>
<dbReference type="KEGG" id="mmo:MMOB2250"/>
<dbReference type="eggNOG" id="COG0238">
    <property type="taxonomic scope" value="Bacteria"/>
</dbReference>
<dbReference type="HOGENOM" id="CLU_148710_2_0_14"/>
<dbReference type="Proteomes" id="UP000009072">
    <property type="component" value="Chromosome"/>
</dbReference>
<dbReference type="GO" id="GO:0022627">
    <property type="term" value="C:cytosolic small ribosomal subunit"/>
    <property type="evidence" value="ECO:0007669"/>
    <property type="project" value="TreeGrafter"/>
</dbReference>
<dbReference type="GO" id="GO:0070181">
    <property type="term" value="F:small ribosomal subunit rRNA binding"/>
    <property type="evidence" value="ECO:0007669"/>
    <property type="project" value="TreeGrafter"/>
</dbReference>
<dbReference type="GO" id="GO:0003735">
    <property type="term" value="F:structural constituent of ribosome"/>
    <property type="evidence" value="ECO:0007669"/>
    <property type="project" value="InterPro"/>
</dbReference>
<dbReference type="GO" id="GO:0006412">
    <property type="term" value="P:translation"/>
    <property type="evidence" value="ECO:0007669"/>
    <property type="project" value="UniProtKB-UniRule"/>
</dbReference>
<dbReference type="Gene3D" id="4.10.640.10">
    <property type="entry name" value="Ribosomal protein S18"/>
    <property type="match status" value="1"/>
</dbReference>
<dbReference type="HAMAP" id="MF_00270">
    <property type="entry name" value="Ribosomal_bS18"/>
    <property type="match status" value="1"/>
</dbReference>
<dbReference type="InterPro" id="IPR001648">
    <property type="entry name" value="Ribosomal_bS18"/>
</dbReference>
<dbReference type="InterPro" id="IPR036870">
    <property type="entry name" value="Ribosomal_bS18_sf"/>
</dbReference>
<dbReference type="NCBIfam" id="TIGR00165">
    <property type="entry name" value="S18"/>
    <property type="match status" value="1"/>
</dbReference>
<dbReference type="PANTHER" id="PTHR13479">
    <property type="entry name" value="30S RIBOSOMAL PROTEIN S18"/>
    <property type="match status" value="1"/>
</dbReference>
<dbReference type="PANTHER" id="PTHR13479:SF40">
    <property type="entry name" value="SMALL RIBOSOMAL SUBUNIT PROTEIN BS18M"/>
    <property type="match status" value="1"/>
</dbReference>
<dbReference type="Pfam" id="PF01084">
    <property type="entry name" value="Ribosomal_S18"/>
    <property type="match status" value="1"/>
</dbReference>
<dbReference type="PRINTS" id="PR00974">
    <property type="entry name" value="RIBOSOMALS18"/>
</dbReference>
<dbReference type="SUPFAM" id="SSF46911">
    <property type="entry name" value="Ribosomal protein S18"/>
    <property type="match status" value="1"/>
</dbReference>
<sequence>MKRIISKKSNRIFKPKPCFFHVEKIKYIDYKDVELVSKYINNHGKILSSKITGNCAKHQRLISNVIKRARIMALIPFISERIRK</sequence>
<keyword id="KW-1185">Reference proteome</keyword>
<keyword id="KW-0687">Ribonucleoprotein</keyword>
<keyword id="KW-0689">Ribosomal protein</keyword>
<keyword id="KW-0694">RNA-binding</keyword>
<keyword id="KW-0699">rRNA-binding</keyword>
<proteinExistence type="inferred from homology"/>
<accession>Q6KI65</accession>
<reference key="1">
    <citation type="journal article" date="2004" name="Genome Res.">
        <title>The complete genome and proteome of Mycoplasma mobile.</title>
        <authorList>
            <person name="Jaffe J.D."/>
            <person name="Stange-Thomann N."/>
            <person name="Smith C."/>
            <person name="DeCaprio D."/>
            <person name="Fisher S."/>
            <person name="Butler J."/>
            <person name="Calvo S."/>
            <person name="Elkins T."/>
            <person name="FitzGerald M.G."/>
            <person name="Hafez N."/>
            <person name="Kodira C.D."/>
            <person name="Major J."/>
            <person name="Wang S."/>
            <person name="Wilkinson J."/>
            <person name="Nicol R."/>
            <person name="Nusbaum C."/>
            <person name="Birren B."/>
            <person name="Berg H.C."/>
            <person name="Church G.M."/>
        </authorList>
    </citation>
    <scope>NUCLEOTIDE SEQUENCE [LARGE SCALE GENOMIC DNA]</scope>
    <source>
        <strain>ATCC 43663 / NCTC 11711 / 163 K</strain>
    </source>
</reference>
<organism>
    <name type="scientific">Mycoplasma mobile (strain ATCC 43663 / 163K / NCTC 11711)</name>
    <name type="common">Mesomycoplasma mobile</name>
    <dbReference type="NCBI Taxonomy" id="267748"/>
    <lineage>
        <taxon>Bacteria</taxon>
        <taxon>Bacillati</taxon>
        <taxon>Mycoplasmatota</taxon>
        <taxon>Mycoplasmoidales</taxon>
        <taxon>Metamycoplasmataceae</taxon>
        <taxon>Mesomycoplasma</taxon>
    </lineage>
</organism>
<protein>
    <recommendedName>
        <fullName evidence="1">Small ribosomal subunit protein bS18</fullName>
    </recommendedName>
    <alternativeName>
        <fullName evidence="2">30S ribosomal protein S18</fullName>
    </alternativeName>
</protein>
<name>RS18_MYCM1</name>
<comment type="function">
    <text evidence="1">Binds as a heterodimer with protein bS6 to the central domain of the 16S rRNA, where it helps stabilize the platform of the 30S subunit.</text>
</comment>
<comment type="subunit">
    <text evidence="1">Part of the 30S ribosomal subunit. Forms a tight heterodimer with protein bS6.</text>
</comment>
<comment type="similarity">
    <text evidence="1">Belongs to the bacterial ribosomal protein bS18 family.</text>
</comment>
<evidence type="ECO:0000255" key="1">
    <source>
        <dbReference type="HAMAP-Rule" id="MF_00270"/>
    </source>
</evidence>
<evidence type="ECO:0000305" key="2"/>
<gene>
    <name evidence="1" type="primary">rpsR</name>
    <name type="ordered locus">MMOB2250</name>
</gene>
<feature type="chain" id="PRO_0000111183" description="Small ribosomal subunit protein bS18">
    <location>
        <begin position="1"/>
        <end position="84"/>
    </location>
</feature>